<evidence type="ECO:0000255" key="1">
    <source>
        <dbReference type="HAMAP-Rule" id="MF_00089"/>
    </source>
</evidence>
<reference key="1">
    <citation type="journal article" date="2008" name="Genome Res.">
        <title>Comparative genome analysis of Salmonella enteritidis PT4 and Salmonella gallinarum 287/91 provides insights into evolutionary and host adaptation pathways.</title>
        <authorList>
            <person name="Thomson N.R."/>
            <person name="Clayton D.J."/>
            <person name="Windhorst D."/>
            <person name="Vernikos G."/>
            <person name="Davidson S."/>
            <person name="Churcher C."/>
            <person name="Quail M.A."/>
            <person name="Stevens M."/>
            <person name="Jones M.A."/>
            <person name="Watson M."/>
            <person name="Barron A."/>
            <person name="Layton A."/>
            <person name="Pickard D."/>
            <person name="Kingsley R.A."/>
            <person name="Bignell A."/>
            <person name="Clark L."/>
            <person name="Harris B."/>
            <person name="Ormond D."/>
            <person name="Abdellah Z."/>
            <person name="Brooks K."/>
            <person name="Cherevach I."/>
            <person name="Chillingworth T."/>
            <person name="Woodward J."/>
            <person name="Norberczak H."/>
            <person name="Lord A."/>
            <person name="Arrowsmith C."/>
            <person name="Jagels K."/>
            <person name="Moule S."/>
            <person name="Mungall K."/>
            <person name="Saunders M."/>
            <person name="Whitehead S."/>
            <person name="Chabalgoity J.A."/>
            <person name="Maskell D."/>
            <person name="Humphreys T."/>
            <person name="Roberts M."/>
            <person name="Barrow P.A."/>
            <person name="Dougan G."/>
            <person name="Parkhill J."/>
        </authorList>
    </citation>
    <scope>NUCLEOTIDE SEQUENCE [LARGE SCALE GENOMIC DNA]</scope>
    <source>
        <strain>P125109</strain>
    </source>
</reference>
<name>THIC_SALEP</name>
<dbReference type="EC" id="4.1.99.17" evidence="1"/>
<dbReference type="EMBL" id="AM933172">
    <property type="protein sequence ID" value="CAR35519.1"/>
    <property type="molecule type" value="Genomic_DNA"/>
</dbReference>
<dbReference type="RefSeq" id="WP_000108429.1">
    <property type="nucleotide sequence ID" value="NC_011294.1"/>
</dbReference>
<dbReference type="SMR" id="B5QYE9"/>
<dbReference type="KEGG" id="set:SEN3950"/>
<dbReference type="HOGENOM" id="CLU_013181_2_1_6"/>
<dbReference type="UniPathway" id="UPA00060"/>
<dbReference type="Proteomes" id="UP000000613">
    <property type="component" value="Chromosome"/>
</dbReference>
<dbReference type="GO" id="GO:0005829">
    <property type="term" value="C:cytosol"/>
    <property type="evidence" value="ECO:0007669"/>
    <property type="project" value="TreeGrafter"/>
</dbReference>
<dbReference type="GO" id="GO:0051539">
    <property type="term" value="F:4 iron, 4 sulfur cluster binding"/>
    <property type="evidence" value="ECO:0007669"/>
    <property type="project" value="UniProtKB-KW"/>
</dbReference>
<dbReference type="GO" id="GO:0016830">
    <property type="term" value="F:carbon-carbon lyase activity"/>
    <property type="evidence" value="ECO:0007669"/>
    <property type="project" value="InterPro"/>
</dbReference>
<dbReference type="GO" id="GO:0008270">
    <property type="term" value="F:zinc ion binding"/>
    <property type="evidence" value="ECO:0007669"/>
    <property type="project" value="UniProtKB-UniRule"/>
</dbReference>
<dbReference type="GO" id="GO:0009228">
    <property type="term" value="P:thiamine biosynthetic process"/>
    <property type="evidence" value="ECO:0007669"/>
    <property type="project" value="UniProtKB-KW"/>
</dbReference>
<dbReference type="GO" id="GO:0009229">
    <property type="term" value="P:thiamine diphosphate biosynthetic process"/>
    <property type="evidence" value="ECO:0007669"/>
    <property type="project" value="UniProtKB-UniRule"/>
</dbReference>
<dbReference type="FunFam" id="3.20.20.540:FF:000001">
    <property type="entry name" value="Phosphomethylpyrimidine synthase"/>
    <property type="match status" value="1"/>
</dbReference>
<dbReference type="Gene3D" id="6.10.250.620">
    <property type="match status" value="1"/>
</dbReference>
<dbReference type="Gene3D" id="3.20.20.540">
    <property type="entry name" value="Radical SAM ThiC family, central domain"/>
    <property type="match status" value="1"/>
</dbReference>
<dbReference type="HAMAP" id="MF_00089">
    <property type="entry name" value="ThiC"/>
    <property type="match status" value="1"/>
</dbReference>
<dbReference type="InterPro" id="IPR037509">
    <property type="entry name" value="ThiC"/>
</dbReference>
<dbReference type="InterPro" id="IPR025747">
    <property type="entry name" value="ThiC-associated_dom"/>
</dbReference>
<dbReference type="InterPro" id="IPR038521">
    <property type="entry name" value="ThiC/Bza_core_dom"/>
</dbReference>
<dbReference type="InterPro" id="IPR002817">
    <property type="entry name" value="ThiC/BzaA/B"/>
</dbReference>
<dbReference type="NCBIfam" id="NF006763">
    <property type="entry name" value="PRK09284.1"/>
    <property type="match status" value="1"/>
</dbReference>
<dbReference type="NCBIfam" id="NF009895">
    <property type="entry name" value="PRK13352.1"/>
    <property type="match status" value="1"/>
</dbReference>
<dbReference type="NCBIfam" id="TIGR00190">
    <property type="entry name" value="thiC"/>
    <property type="match status" value="1"/>
</dbReference>
<dbReference type="PANTHER" id="PTHR30557:SF1">
    <property type="entry name" value="PHOSPHOMETHYLPYRIMIDINE SYNTHASE, CHLOROPLASTIC"/>
    <property type="match status" value="1"/>
</dbReference>
<dbReference type="PANTHER" id="PTHR30557">
    <property type="entry name" value="THIAMINE BIOSYNTHESIS PROTEIN THIC"/>
    <property type="match status" value="1"/>
</dbReference>
<dbReference type="Pfam" id="PF13667">
    <property type="entry name" value="ThiC-associated"/>
    <property type="match status" value="1"/>
</dbReference>
<dbReference type="Pfam" id="PF01964">
    <property type="entry name" value="ThiC_Rad_SAM"/>
    <property type="match status" value="1"/>
</dbReference>
<dbReference type="SFLD" id="SFLDF00407">
    <property type="entry name" value="phosphomethylpyrimidine_syntha"/>
    <property type="match status" value="1"/>
</dbReference>
<dbReference type="SFLD" id="SFLDG01114">
    <property type="entry name" value="phosphomethylpyrimidine_syntha"/>
    <property type="match status" value="1"/>
</dbReference>
<dbReference type="SFLD" id="SFLDS00113">
    <property type="entry name" value="Radical_SAM_Phosphomethylpyrim"/>
    <property type="match status" value="1"/>
</dbReference>
<gene>
    <name evidence="1" type="primary">thiC</name>
    <name type="ordered locus">SEN3950</name>
</gene>
<comment type="function">
    <text evidence="1">Catalyzes the synthesis of the hydroxymethylpyrimidine phosphate (HMP-P) moiety of thiamine from aminoimidazole ribotide (AIR) in a radical S-adenosyl-L-methionine (SAM)-dependent reaction.</text>
</comment>
<comment type="catalytic activity">
    <reaction evidence="1">
        <text>5-amino-1-(5-phospho-beta-D-ribosyl)imidazole + S-adenosyl-L-methionine = 4-amino-2-methyl-5-(phosphooxymethyl)pyrimidine + CO + 5'-deoxyadenosine + formate + L-methionine + 3 H(+)</text>
        <dbReference type="Rhea" id="RHEA:24840"/>
        <dbReference type="ChEBI" id="CHEBI:15378"/>
        <dbReference type="ChEBI" id="CHEBI:15740"/>
        <dbReference type="ChEBI" id="CHEBI:17245"/>
        <dbReference type="ChEBI" id="CHEBI:17319"/>
        <dbReference type="ChEBI" id="CHEBI:57844"/>
        <dbReference type="ChEBI" id="CHEBI:58354"/>
        <dbReference type="ChEBI" id="CHEBI:59789"/>
        <dbReference type="ChEBI" id="CHEBI:137981"/>
        <dbReference type="EC" id="4.1.99.17"/>
    </reaction>
</comment>
<comment type="cofactor">
    <cofactor evidence="1">
        <name>[4Fe-4S] cluster</name>
        <dbReference type="ChEBI" id="CHEBI:49883"/>
    </cofactor>
    <text evidence="1">Binds 1 [4Fe-4S] cluster per subunit. The cluster is coordinated with 3 cysteines and an exchangeable S-adenosyl-L-methionine.</text>
</comment>
<comment type="pathway">
    <text evidence="1">Cofactor biosynthesis; thiamine diphosphate biosynthesis.</text>
</comment>
<comment type="subunit">
    <text evidence="1">Homodimer.</text>
</comment>
<comment type="similarity">
    <text evidence="1">Belongs to the ThiC family.</text>
</comment>
<proteinExistence type="inferred from homology"/>
<organism>
    <name type="scientific">Salmonella enteritidis PT4 (strain P125109)</name>
    <dbReference type="NCBI Taxonomy" id="550537"/>
    <lineage>
        <taxon>Bacteria</taxon>
        <taxon>Pseudomonadati</taxon>
        <taxon>Pseudomonadota</taxon>
        <taxon>Gammaproteobacteria</taxon>
        <taxon>Enterobacterales</taxon>
        <taxon>Enterobacteriaceae</taxon>
        <taxon>Salmonella</taxon>
    </lineage>
</organism>
<protein>
    <recommendedName>
        <fullName evidence="1">Phosphomethylpyrimidine synthase</fullName>
        <ecNumber evidence="1">4.1.99.17</ecNumber>
    </recommendedName>
    <alternativeName>
        <fullName evidence="1">Hydroxymethylpyrimidine phosphate synthase</fullName>
        <shortName evidence="1">HMP-P synthase</shortName>
        <shortName evidence="1">HMP-phosphate synthase</shortName>
        <shortName evidence="1">HMPP synthase</shortName>
    </alternativeName>
    <alternativeName>
        <fullName evidence="1">Thiamine biosynthesis protein ThiC</fullName>
    </alternativeName>
</protein>
<feature type="chain" id="PRO_1000093229" description="Phosphomethylpyrimidine synthase">
    <location>
        <begin position="1"/>
        <end position="631"/>
    </location>
</feature>
<feature type="binding site" evidence="1">
    <location>
        <position position="239"/>
    </location>
    <ligand>
        <name>substrate</name>
    </ligand>
</feature>
<feature type="binding site" evidence="1">
    <location>
        <position position="268"/>
    </location>
    <ligand>
        <name>substrate</name>
    </ligand>
</feature>
<feature type="binding site" evidence="1">
    <location>
        <position position="297"/>
    </location>
    <ligand>
        <name>substrate</name>
    </ligand>
</feature>
<feature type="binding site" evidence="1">
    <location>
        <position position="333"/>
    </location>
    <ligand>
        <name>substrate</name>
    </ligand>
</feature>
<feature type="binding site" evidence="1">
    <location>
        <begin position="353"/>
        <end position="355"/>
    </location>
    <ligand>
        <name>substrate</name>
    </ligand>
</feature>
<feature type="binding site" evidence="1">
    <location>
        <begin position="394"/>
        <end position="397"/>
    </location>
    <ligand>
        <name>substrate</name>
    </ligand>
</feature>
<feature type="binding site" evidence="1">
    <location>
        <position position="433"/>
    </location>
    <ligand>
        <name>substrate</name>
    </ligand>
</feature>
<feature type="binding site" evidence="1">
    <location>
        <position position="437"/>
    </location>
    <ligand>
        <name>Zn(2+)</name>
        <dbReference type="ChEBI" id="CHEBI:29105"/>
    </ligand>
</feature>
<feature type="binding site" evidence="1">
    <location>
        <position position="460"/>
    </location>
    <ligand>
        <name>substrate</name>
    </ligand>
</feature>
<feature type="binding site" evidence="1">
    <location>
        <position position="501"/>
    </location>
    <ligand>
        <name>Zn(2+)</name>
        <dbReference type="ChEBI" id="CHEBI:29105"/>
    </ligand>
</feature>
<feature type="binding site" evidence="1">
    <location>
        <position position="581"/>
    </location>
    <ligand>
        <name>[4Fe-4S] cluster</name>
        <dbReference type="ChEBI" id="CHEBI:49883"/>
        <note>4Fe-4S-S-AdoMet</note>
    </ligand>
</feature>
<feature type="binding site" evidence="1">
    <location>
        <position position="584"/>
    </location>
    <ligand>
        <name>[4Fe-4S] cluster</name>
        <dbReference type="ChEBI" id="CHEBI:49883"/>
        <note>4Fe-4S-S-AdoMet</note>
    </ligand>
</feature>
<feature type="binding site" evidence="1">
    <location>
        <position position="589"/>
    </location>
    <ligand>
        <name>[4Fe-4S] cluster</name>
        <dbReference type="ChEBI" id="CHEBI:49883"/>
        <note>4Fe-4S-S-AdoMet</note>
    </ligand>
</feature>
<sequence>MSTTTLTRREQRAKAQHFIDTLEGTAFPNSKRIYVTGSQHDIRVPMREIQLSPTLIGGSKDNQQFEENEAVPVYDTSGPYGDPEVAINVQQGLAKLRQPWIDARNDSEELDDRSSAYTRERLADDGLDDLRFTGLLTPKRAKAGKRITQLHYARQGIVTPEMEFIAIRENMGRERICSEVLRHQHPGMSFGARLPENITPEFVRDEVAAGRAIIPANINHPESEPMIIGRNFLVKVNANIGNSAVTSSIEEEVEKLVWSTRWGADTVMDLSTGRYIHETREWILRNSPVPIGTVPIYQALEKVNGIAEDLTWEAFRDTLLEQAEQGVDYFTIHAGVLLRYVPMTAKRLTGIVSRGGSIMAKWCLSHHKENFLFEHFREICEICAAYDVSLSLGDGLRPGSIQDANDEAQFSELHTLGELTKIAWEYDVQVMIEGPGHVPMHMIQRNMTEELESCHEAPFYTLGPLTTDIAPGYDHFTSGIGAAMIGWFGCAMLCYVTPKEHLGLPNKEDVKQGLITYKIAAHAADLAKGHPGAQIRDNAMSKARFEFRWEDQFNLALDPFTARAYHDETLPQESGKVAHFCSMCGPKFCSMKISQEVRDYAAAQAIEVGMADMSENFRAKGGEIYLKREEA</sequence>
<accession>B5QYE9</accession>
<keyword id="KW-0004">4Fe-4S</keyword>
<keyword id="KW-0408">Iron</keyword>
<keyword id="KW-0411">Iron-sulfur</keyword>
<keyword id="KW-0456">Lyase</keyword>
<keyword id="KW-0479">Metal-binding</keyword>
<keyword id="KW-0949">S-adenosyl-L-methionine</keyword>
<keyword id="KW-0784">Thiamine biosynthesis</keyword>
<keyword id="KW-0862">Zinc</keyword>